<dbReference type="EC" id="2.7.10.1"/>
<dbReference type="EMBL" id="AF056187">
    <property type="protein sequence ID" value="AAC12782.1"/>
    <property type="molecule type" value="mRNA"/>
</dbReference>
<dbReference type="EMBL" id="U00182">
    <property type="protein sequence ID" value="AAC52123.1"/>
    <property type="molecule type" value="mRNA"/>
</dbReference>
<dbReference type="EMBL" id="M33422">
    <property type="protein sequence ID" value="AAA40013.1"/>
    <property type="molecule type" value="mRNA"/>
</dbReference>
<dbReference type="PIR" id="A48805">
    <property type="entry name" value="A48805"/>
</dbReference>
<dbReference type="PIR" id="JH0113">
    <property type="entry name" value="JH0113"/>
</dbReference>
<dbReference type="RefSeq" id="NP_034643.2">
    <property type="nucleotide sequence ID" value="NM_010513.2"/>
</dbReference>
<dbReference type="PDB" id="6PYH">
    <property type="method" value="EM"/>
    <property type="resolution" value="4.30 A"/>
    <property type="chains" value="A/D=31-1292"/>
</dbReference>
<dbReference type="PDB" id="8EYR">
    <property type="method" value="EM"/>
    <property type="resolution" value="4.00 A"/>
    <property type="chains" value="A/B=31-1292"/>
</dbReference>
<dbReference type="PDBsum" id="6PYH"/>
<dbReference type="PDBsum" id="8EYR"/>
<dbReference type="EMDB" id="EMD-20524"/>
<dbReference type="EMDB" id="EMD-28693"/>
<dbReference type="SMR" id="Q60751"/>
<dbReference type="BioGRID" id="200548">
    <property type="interactions" value="7"/>
</dbReference>
<dbReference type="FunCoup" id="Q60751">
    <property type="interactions" value="1619"/>
</dbReference>
<dbReference type="IntAct" id="Q60751">
    <property type="interactions" value="2"/>
</dbReference>
<dbReference type="MINT" id="Q60751"/>
<dbReference type="STRING" id="10090.ENSMUSP00000005671"/>
<dbReference type="BindingDB" id="Q60751"/>
<dbReference type="ChEMBL" id="CHEMBL5381"/>
<dbReference type="GlyConnect" id="2392">
    <property type="glycosylation" value="2 N-Linked glycans (2 sites)"/>
</dbReference>
<dbReference type="GlyCosmos" id="Q60751">
    <property type="glycosylation" value="16 sites, 2 glycans"/>
</dbReference>
<dbReference type="GlyGen" id="Q60751">
    <property type="glycosylation" value="17 sites, 8 N-linked glycans (9 sites), 1 O-linked glycan (1 site)"/>
</dbReference>
<dbReference type="iPTMnet" id="Q60751"/>
<dbReference type="PhosphoSitePlus" id="Q60751"/>
<dbReference type="PaxDb" id="10090-ENSMUSP00000005671"/>
<dbReference type="PeptideAtlas" id="Q60751"/>
<dbReference type="ProteomicsDB" id="267294"/>
<dbReference type="Pumba" id="Q60751"/>
<dbReference type="DNASU" id="16001"/>
<dbReference type="GeneID" id="16001"/>
<dbReference type="KEGG" id="mmu:16001"/>
<dbReference type="AGR" id="MGI:96433"/>
<dbReference type="CTD" id="3480"/>
<dbReference type="MGI" id="MGI:96433">
    <property type="gene designation" value="Igf1r"/>
</dbReference>
<dbReference type="eggNOG" id="KOG4258">
    <property type="taxonomic scope" value="Eukaryota"/>
</dbReference>
<dbReference type="InParanoid" id="Q60751"/>
<dbReference type="OrthoDB" id="5809444at2759"/>
<dbReference type="PhylomeDB" id="Q60751"/>
<dbReference type="BRENDA" id="2.7.10.1">
    <property type="organism ID" value="3474"/>
</dbReference>
<dbReference type="Reactome" id="R-MMU-2404192">
    <property type="pathway name" value="Signaling by Type 1 Insulin-like Growth Factor 1 Receptor (IGF1R)"/>
</dbReference>
<dbReference type="Reactome" id="R-MMU-2428928">
    <property type="pathway name" value="IRS-related events triggered by IGF1R"/>
</dbReference>
<dbReference type="Reactome" id="R-MMU-2428933">
    <property type="pathway name" value="SHC-related events triggered by IGF1R"/>
</dbReference>
<dbReference type="Reactome" id="R-MMU-9009391">
    <property type="pathway name" value="Extra-nuclear estrogen signaling"/>
</dbReference>
<dbReference type="BioGRID-ORCS" id="16001">
    <property type="hits" value="13 hits in 82 CRISPR screens"/>
</dbReference>
<dbReference type="ChiTaRS" id="Igf1r">
    <property type="organism name" value="mouse"/>
</dbReference>
<dbReference type="PRO" id="PR:Q60751"/>
<dbReference type="Proteomes" id="UP000000589">
    <property type="component" value="Unplaced"/>
</dbReference>
<dbReference type="RNAct" id="Q60751">
    <property type="molecule type" value="protein"/>
</dbReference>
<dbReference type="GO" id="GO:0098978">
    <property type="term" value="C:glutamatergic synapse"/>
    <property type="evidence" value="ECO:0000314"/>
    <property type="project" value="SynGO"/>
</dbReference>
<dbReference type="GO" id="GO:0016020">
    <property type="term" value="C:membrane"/>
    <property type="evidence" value="ECO:0000314"/>
    <property type="project" value="MGI"/>
</dbReference>
<dbReference type="GO" id="GO:0005886">
    <property type="term" value="C:plasma membrane"/>
    <property type="evidence" value="ECO:0000314"/>
    <property type="project" value="MGI"/>
</dbReference>
<dbReference type="GO" id="GO:0098794">
    <property type="term" value="C:postsynapse"/>
    <property type="evidence" value="ECO:0007669"/>
    <property type="project" value="GOC"/>
</dbReference>
<dbReference type="GO" id="GO:0043235">
    <property type="term" value="C:receptor complex"/>
    <property type="evidence" value="ECO:0000266"/>
    <property type="project" value="MGI"/>
</dbReference>
<dbReference type="GO" id="GO:0030315">
    <property type="term" value="C:T-tubule"/>
    <property type="evidence" value="ECO:0000314"/>
    <property type="project" value="MGI"/>
</dbReference>
<dbReference type="GO" id="GO:0005524">
    <property type="term" value="F:ATP binding"/>
    <property type="evidence" value="ECO:0007669"/>
    <property type="project" value="UniProtKB-KW"/>
</dbReference>
<dbReference type="GO" id="GO:0043560">
    <property type="term" value="F:insulin receptor substrate binding"/>
    <property type="evidence" value="ECO:0000250"/>
    <property type="project" value="UniProtKB"/>
</dbReference>
<dbReference type="GO" id="GO:0005520">
    <property type="term" value="F:insulin-like growth factor binding"/>
    <property type="evidence" value="ECO:0000353"/>
    <property type="project" value="MGI"/>
</dbReference>
<dbReference type="GO" id="GO:0005010">
    <property type="term" value="F:insulin-like growth factor receptor activity"/>
    <property type="evidence" value="ECO:0000314"/>
    <property type="project" value="MGI"/>
</dbReference>
<dbReference type="GO" id="GO:0043548">
    <property type="term" value="F:phosphatidylinositol 3-kinase binding"/>
    <property type="evidence" value="ECO:0000250"/>
    <property type="project" value="UniProtKB"/>
</dbReference>
<dbReference type="GO" id="GO:0004713">
    <property type="term" value="F:protein tyrosine kinase activity"/>
    <property type="evidence" value="ECO:0000314"/>
    <property type="project" value="MGI"/>
</dbReference>
<dbReference type="GO" id="GO:0005198">
    <property type="term" value="F:structural molecule activity"/>
    <property type="evidence" value="ECO:0000250"/>
    <property type="project" value="UniProtKB"/>
</dbReference>
<dbReference type="GO" id="GO:0030325">
    <property type="term" value="P:adrenal gland development"/>
    <property type="evidence" value="ECO:0000316"/>
    <property type="project" value="CACAO"/>
</dbReference>
<dbReference type="GO" id="GO:0009887">
    <property type="term" value="P:animal organ morphogenesis"/>
    <property type="evidence" value="ECO:0000315"/>
    <property type="project" value="MGI"/>
</dbReference>
<dbReference type="GO" id="GO:0007420">
    <property type="term" value="P:brain development"/>
    <property type="evidence" value="ECO:0000315"/>
    <property type="project" value="MGI"/>
</dbReference>
<dbReference type="GO" id="GO:0071333">
    <property type="term" value="P:cellular response to glucose stimulus"/>
    <property type="evidence" value="ECO:0000315"/>
    <property type="project" value="MGI"/>
</dbReference>
<dbReference type="GO" id="GO:0032869">
    <property type="term" value="P:cellular response to insulin stimulus"/>
    <property type="evidence" value="ECO:0000315"/>
    <property type="project" value="MGI"/>
</dbReference>
<dbReference type="GO" id="GO:0008544">
    <property type="term" value="P:epidermis development"/>
    <property type="evidence" value="ECO:0000315"/>
    <property type="project" value="MGI"/>
</dbReference>
<dbReference type="GO" id="GO:0031017">
    <property type="term" value="P:exocrine pancreas development"/>
    <property type="evidence" value="ECO:0000315"/>
    <property type="project" value="MGI"/>
</dbReference>
<dbReference type="GO" id="GO:0048009">
    <property type="term" value="P:insulin-like growth factor receptor signaling pathway"/>
    <property type="evidence" value="ECO:0000314"/>
    <property type="project" value="MGI"/>
</dbReference>
<dbReference type="GO" id="GO:0030238">
    <property type="term" value="P:male sex determination"/>
    <property type="evidence" value="ECO:0000315"/>
    <property type="project" value="MGI"/>
</dbReference>
<dbReference type="GO" id="GO:0030879">
    <property type="term" value="P:mammary gland development"/>
    <property type="evidence" value="ECO:0000315"/>
    <property type="project" value="MGI"/>
</dbReference>
<dbReference type="GO" id="GO:0000165">
    <property type="term" value="P:MAPK cascade"/>
    <property type="evidence" value="ECO:0000315"/>
    <property type="project" value="MGI"/>
</dbReference>
<dbReference type="GO" id="GO:0140014">
    <property type="term" value="P:mitotic nuclear division"/>
    <property type="evidence" value="ECO:0000315"/>
    <property type="project" value="MGI"/>
</dbReference>
<dbReference type="GO" id="GO:0043409">
    <property type="term" value="P:negative regulation of MAPK cascade"/>
    <property type="evidence" value="ECO:0000315"/>
    <property type="project" value="MGI"/>
</dbReference>
<dbReference type="GO" id="GO:0051898">
    <property type="term" value="P:negative regulation of phosphatidylinositol 3-kinase/protein kinase B signal transduction"/>
    <property type="evidence" value="ECO:0000315"/>
    <property type="project" value="MGI"/>
</dbReference>
<dbReference type="GO" id="GO:0043491">
    <property type="term" value="P:phosphatidylinositol 3-kinase/protein kinase B signal transduction"/>
    <property type="evidence" value="ECO:0000315"/>
    <property type="project" value="MGI"/>
</dbReference>
<dbReference type="GO" id="GO:0120162">
    <property type="term" value="P:positive regulation of cold-induced thermogenesis"/>
    <property type="evidence" value="ECO:0000315"/>
    <property type="project" value="YuBioLab"/>
</dbReference>
<dbReference type="GO" id="GO:0048639">
    <property type="term" value="P:positive regulation of developmental growth"/>
    <property type="evidence" value="ECO:0000315"/>
    <property type="project" value="CACAO"/>
</dbReference>
<dbReference type="GO" id="GO:0045893">
    <property type="term" value="P:positive regulation of DNA-templated transcription"/>
    <property type="evidence" value="ECO:0000316"/>
    <property type="project" value="CACAO"/>
</dbReference>
<dbReference type="GO" id="GO:0043410">
    <property type="term" value="P:positive regulation of MAPK cascade"/>
    <property type="evidence" value="ECO:0000315"/>
    <property type="project" value="MGI"/>
</dbReference>
<dbReference type="GO" id="GO:0051446">
    <property type="term" value="P:positive regulation of meiotic cell cycle"/>
    <property type="evidence" value="ECO:0000316"/>
    <property type="project" value="CACAO"/>
</dbReference>
<dbReference type="GO" id="GO:0045840">
    <property type="term" value="P:positive regulation of mitotic nuclear division"/>
    <property type="evidence" value="ECO:0000315"/>
    <property type="project" value="MGI"/>
</dbReference>
<dbReference type="GO" id="GO:0051897">
    <property type="term" value="P:positive regulation of phosphatidylinositol 3-kinase/protein kinase B signal transduction"/>
    <property type="evidence" value="ECO:0000315"/>
    <property type="project" value="MGI"/>
</dbReference>
<dbReference type="GO" id="GO:0099170">
    <property type="term" value="P:postsynaptic modulation of chemical synaptic transmission"/>
    <property type="evidence" value="ECO:0000314"/>
    <property type="project" value="SynGO"/>
</dbReference>
<dbReference type="GO" id="GO:0060740">
    <property type="term" value="P:prostate gland epithelium morphogenesis"/>
    <property type="evidence" value="ECO:0000315"/>
    <property type="project" value="MGI"/>
</dbReference>
<dbReference type="GO" id="GO:0046777">
    <property type="term" value="P:protein autophosphorylation"/>
    <property type="evidence" value="ECO:0000250"/>
    <property type="project" value="UniProtKB"/>
</dbReference>
<dbReference type="CDD" id="cd00063">
    <property type="entry name" value="FN3"/>
    <property type="match status" value="3"/>
</dbReference>
<dbReference type="CDD" id="cd00064">
    <property type="entry name" value="FU"/>
    <property type="match status" value="1"/>
</dbReference>
<dbReference type="CDD" id="cd05032">
    <property type="entry name" value="PTKc_InsR_like"/>
    <property type="match status" value="1"/>
</dbReference>
<dbReference type="FunFam" id="2.60.40.10:FF:002810">
    <property type="entry name" value="Insulin-like growth factor 1 receptor"/>
    <property type="match status" value="1"/>
</dbReference>
<dbReference type="FunFam" id="1.10.510.10:FF:000050">
    <property type="entry name" value="Tyrosine-protein kinase receptor"/>
    <property type="match status" value="1"/>
</dbReference>
<dbReference type="FunFam" id="2.10.220.10:FF:000007">
    <property type="entry name" value="Tyrosine-protein kinase receptor"/>
    <property type="match status" value="1"/>
</dbReference>
<dbReference type="FunFam" id="2.60.40.10:FF:000087">
    <property type="entry name" value="Tyrosine-protein kinase receptor"/>
    <property type="match status" value="1"/>
</dbReference>
<dbReference type="FunFam" id="2.60.40.10:FF:002452">
    <property type="entry name" value="Tyrosine-protein kinase receptor"/>
    <property type="match status" value="1"/>
</dbReference>
<dbReference type="FunFam" id="3.30.200.20:FF:000026">
    <property type="entry name" value="Tyrosine-protein kinase receptor"/>
    <property type="match status" value="1"/>
</dbReference>
<dbReference type="FunFam" id="3.80.20.20:FF:000001">
    <property type="entry name" value="Tyrosine-protein kinase receptor"/>
    <property type="match status" value="1"/>
</dbReference>
<dbReference type="FunFam" id="3.80.20.20:FF:000002">
    <property type="entry name" value="Tyrosine-protein kinase receptor"/>
    <property type="match status" value="1"/>
</dbReference>
<dbReference type="Gene3D" id="2.10.220.10">
    <property type="entry name" value="Hormone Receptor, Insulin-like Growth Factor Receptor 1, Chain A, domain 2"/>
    <property type="match status" value="1"/>
</dbReference>
<dbReference type="Gene3D" id="2.60.40.10">
    <property type="entry name" value="Immunoglobulins"/>
    <property type="match status" value="3"/>
</dbReference>
<dbReference type="Gene3D" id="3.30.200.20">
    <property type="entry name" value="Phosphorylase Kinase, domain 1"/>
    <property type="match status" value="1"/>
</dbReference>
<dbReference type="Gene3D" id="3.80.20.20">
    <property type="entry name" value="Receptor L-domain"/>
    <property type="match status" value="2"/>
</dbReference>
<dbReference type="Gene3D" id="1.10.510.10">
    <property type="entry name" value="Transferase(Phosphotransferase) domain 1"/>
    <property type="match status" value="1"/>
</dbReference>
<dbReference type="InterPro" id="IPR003961">
    <property type="entry name" value="FN3_dom"/>
</dbReference>
<dbReference type="InterPro" id="IPR036116">
    <property type="entry name" value="FN3_sf"/>
</dbReference>
<dbReference type="InterPro" id="IPR006211">
    <property type="entry name" value="Furin-like_Cys-rich_dom"/>
</dbReference>
<dbReference type="InterPro" id="IPR006212">
    <property type="entry name" value="Furin_repeat"/>
</dbReference>
<dbReference type="InterPro" id="IPR009030">
    <property type="entry name" value="Growth_fac_rcpt_cys_sf"/>
</dbReference>
<dbReference type="InterPro" id="IPR013783">
    <property type="entry name" value="Ig-like_fold"/>
</dbReference>
<dbReference type="InterPro" id="IPR011009">
    <property type="entry name" value="Kinase-like_dom_sf"/>
</dbReference>
<dbReference type="InterPro" id="IPR000719">
    <property type="entry name" value="Prot_kinase_dom"/>
</dbReference>
<dbReference type="InterPro" id="IPR017441">
    <property type="entry name" value="Protein_kinase_ATP_BS"/>
</dbReference>
<dbReference type="InterPro" id="IPR000494">
    <property type="entry name" value="Rcpt_L-dom"/>
</dbReference>
<dbReference type="InterPro" id="IPR036941">
    <property type="entry name" value="Rcpt_L-dom_sf"/>
</dbReference>
<dbReference type="InterPro" id="IPR050122">
    <property type="entry name" value="RTK"/>
</dbReference>
<dbReference type="InterPro" id="IPR001245">
    <property type="entry name" value="Ser-Thr/Tyr_kinase_cat_dom"/>
</dbReference>
<dbReference type="InterPro" id="IPR008266">
    <property type="entry name" value="Tyr_kinase_AS"/>
</dbReference>
<dbReference type="InterPro" id="IPR020635">
    <property type="entry name" value="Tyr_kinase_cat_dom"/>
</dbReference>
<dbReference type="InterPro" id="IPR016246">
    <property type="entry name" value="Tyr_kinase_insulin-like_rcpt"/>
</dbReference>
<dbReference type="InterPro" id="IPR002011">
    <property type="entry name" value="Tyr_kinase_rcpt_2_CS"/>
</dbReference>
<dbReference type="PANTHER" id="PTHR24416:SF106">
    <property type="entry name" value="INSULIN-LIKE GROWTH FACTOR 1 RECEPTOR"/>
    <property type="match status" value="1"/>
</dbReference>
<dbReference type="PANTHER" id="PTHR24416">
    <property type="entry name" value="TYROSINE-PROTEIN KINASE RECEPTOR"/>
    <property type="match status" value="1"/>
</dbReference>
<dbReference type="Pfam" id="PF00757">
    <property type="entry name" value="Furin-like"/>
    <property type="match status" value="1"/>
</dbReference>
<dbReference type="Pfam" id="PF07714">
    <property type="entry name" value="PK_Tyr_Ser-Thr"/>
    <property type="match status" value="1"/>
</dbReference>
<dbReference type="Pfam" id="PF01030">
    <property type="entry name" value="Recep_L_domain"/>
    <property type="match status" value="2"/>
</dbReference>
<dbReference type="PIRSF" id="PIRSF000620">
    <property type="entry name" value="Insulin_receptor"/>
    <property type="match status" value="1"/>
</dbReference>
<dbReference type="PRINTS" id="PR00109">
    <property type="entry name" value="TYRKINASE"/>
</dbReference>
<dbReference type="SMART" id="SM00060">
    <property type="entry name" value="FN3"/>
    <property type="match status" value="3"/>
</dbReference>
<dbReference type="SMART" id="SM00261">
    <property type="entry name" value="FU"/>
    <property type="match status" value="1"/>
</dbReference>
<dbReference type="SMART" id="SM00219">
    <property type="entry name" value="TyrKc"/>
    <property type="match status" value="1"/>
</dbReference>
<dbReference type="SUPFAM" id="SSF49265">
    <property type="entry name" value="Fibronectin type III"/>
    <property type="match status" value="3"/>
</dbReference>
<dbReference type="SUPFAM" id="SSF57184">
    <property type="entry name" value="Growth factor receptor domain"/>
    <property type="match status" value="1"/>
</dbReference>
<dbReference type="SUPFAM" id="SSF52058">
    <property type="entry name" value="L domain-like"/>
    <property type="match status" value="2"/>
</dbReference>
<dbReference type="SUPFAM" id="SSF56112">
    <property type="entry name" value="Protein kinase-like (PK-like)"/>
    <property type="match status" value="1"/>
</dbReference>
<dbReference type="PROSITE" id="PS50853">
    <property type="entry name" value="FN3"/>
    <property type="match status" value="4"/>
</dbReference>
<dbReference type="PROSITE" id="PS00107">
    <property type="entry name" value="PROTEIN_KINASE_ATP"/>
    <property type="match status" value="1"/>
</dbReference>
<dbReference type="PROSITE" id="PS50011">
    <property type="entry name" value="PROTEIN_KINASE_DOM"/>
    <property type="match status" value="1"/>
</dbReference>
<dbReference type="PROSITE" id="PS00109">
    <property type="entry name" value="PROTEIN_KINASE_TYR"/>
    <property type="match status" value="1"/>
</dbReference>
<dbReference type="PROSITE" id="PS00239">
    <property type="entry name" value="RECEPTOR_TYR_KIN_II"/>
    <property type="match status" value="1"/>
</dbReference>
<evidence type="ECO:0000250" key="1"/>
<evidence type="ECO:0000250" key="2">
    <source>
        <dbReference type="UniProtKB" id="P08069"/>
    </source>
</evidence>
<evidence type="ECO:0000255" key="3"/>
<evidence type="ECO:0000255" key="4">
    <source>
        <dbReference type="PROSITE-ProRule" id="PRU00159"/>
    </source>
</evidence>
<evidence type="ECO:0000255" key="5">
    <source>
        <dbReference type="PROSITE-ProRule" id="PRU00316"/>
    </source>
</evidence>
<evidence type="ECO:0000255" key="6">
    <source>
        <dbReference type="PROSITE-ProRule" id="PRU10028"/>
    </source>
</evidence>
<evidence type="ECO:0000256" key="7">
    <source>
        <dbReference type="SAM" id="MobiDB-lite"/>
    </source>
</evidence>
<evidence type="ECO:0000269" key="8">
    <source>
    </source>
</evidence>
<evidence type="ECO:0000269" key="9">
    <source>
    </source>
</evidence>
<evidence type="ECO:0000269" key="10">
    <source>
    </source>
</evidence>
<evidence type="ECO:0000269" key="11">
    <source>
    </source>
</evidence>
<evidence type="ECO:0000269" key="12">
    <source>
    </source>
</evidence>
<evidence type="ECO:0000305" key="13"/>
<organism>
    <name type="scientific">Mus musculus</name>
    <name type="common">Mouse</name>
    <dbReference type="NCBI Taxonomy" id="10090"/>
    <lineage>
        <taxon>Eukaryota</taxon>
        <taxon>Metazoa</taxon>
        <taxon>Chordata</taxon>
        <taxon>Craniata</taxon>
        <taxon>Vertebrata</taxon>
        <taxon>Euteleostomi</taxon>
        <taxon>Mammalia</taxon>
        <taxon>Eutheria</taxon>
        <taxon>Euarchontoglires</taxon>
        <taxon>Glires</taxon>
        <taxon>Rodentia</taxon>
        <taxon>Myomorpha</taxon>
        <taxon>Muroidea</taxon>
        <taxon>Muridae</taxon>
        <taxon>Murinae</taxon>
        <taxon>Mus</taxon>
        <taxon>Mus</taxon>
    </lineage>
</organism>
<gene>
    <name type="primary">Igf1r</name>
</gene>
<feature type="signal peptide" evidence="3">
    <location>
        <begin position="1"/>
        <end position="30"/>
    </location>
</feature>
<feature type="chain" id="PRO_0000016683" description="Insulin-like growth factor 1 receptor alpha chain">
    <location>
        <begin position="31"/>
        <end position="737"/>
    </location>
</feature>
<feature type="chain" id="PRO_0000016684" description="Insulin-like growth factor 1 receptor beta chain">
    <location>
        <begin position="742"/>
        <end position="1373"/>
    </location>
</feature>
<feature type="topological domain" description="Extracellular" evidence="3">
    <location>
        <begin position="742"/>
        <end position="936"/>
    </location>
</feature>
<feature type="transmembrane region" description="Helical" evidence="3">
    <location>
        <begin position="937"/>
        <end position="960"/>
    </location>
</feature>
<feature type="topological domain" description="Cytoplasmic" evidence="1">
    <location>
        <begin position="961"/>
        <end position="1373"/>
    </location>
</feature>
<feature type="domain" description="Fibronectin type-III 1" evidence="5">
    <location>
        <begin position="490"/>
        <end position="610"/>
    </location>
</feature>
<feature type="domain" description="Fibronectin type-III 2" evidence="5">
    <location>
        <begin position="611"/>
        <end position="709"/>
    </location>
</feature>
<feature type="domain" description="Fibronectin type-III 3" evidence="5">
    <location>
        <begin position="735"/>
        <end position="829"/>
    </location>
</feature>
<feature type="domain" description="Fibronectin type-III 4" evidence="5">
    <location>
        <begin position="835"/>
        <end position="928"/>
    </location>
</feature>
<feature type="domain" description="Protein kinase" evidence="4">
    <location>
        <begin position="1000"/>
        <end position="1276"/>
    </location>
</feature>
<feature type="region of interest" description="Disordered" evidence="7">
    <location>
        <begin position="1283"/>
        <end position="1373"/>
    </location>
</feature>
<feature type="short sequence motif" description="IRS1- and SHC1-binding" evidence="1">
    <location>
        <begin position="978"/>
        <end position="981"/>
    </location>
</feature>
<feature type="compositionally biased region" description="Acidic residues" evidence="7">
    <location>
        <begin position="1292"/>
        <end position="1305"/>
    </location>
</feature>
<feature type="compositionally biased region" description="Low complexity" evidence="7">
    <location>
        <begin position="1306"/>
        <end position="1322"/>
    </location>
</feature>
<feature type="compositionally biased region" description="Basic and acidic residues" evidence="7">
    <location>
        <begin position="1323"/>
        <end position="1332"/>
    </location>
</feature>
<feature type="active site" description="Proton acceptor" evidence="4 6">
    <location>
        <position position="1137"/>
    </location>
</feature>
<feature type="binding site" evidence="4">
    <location>
        <begin position="1006"/>
        <end position="1014"/>
    </location>
    <ligand>
        <name>ATP</name>
        <dbReference type="ChEBI" id="CHEBI:30616"/>
    </ligand>
</feature>
<feature type="binding site" evidence="4">
    <location>
        <position position="1034"/>
    </location>
    <ligand>
        <name>ATP</name>
        <dbReference type="ChEBI" id="CHEBI:30616"/>
    </ligand>
</feature>
<feature type="modified residue" description="Phosphotyrosine" evidence="2">
    <location>
        <position position="981"/>
    </location>
</feature>
<feature type="modified residue" description="Phosphotyrosine; by autocatalysis" evidence="2">
    <location>
        <position position="1163"/>
    </location>
</feature>
<feature type="modified residue" description="Phosphotyrosine; by autocatalysis" evidence="2">
    <location>
        <position position="1167"/>
    </location>
</feature>
<feature type="modified residue" description="Phosphotyrosine; by autocatalysis" evidence="2">
    <location>
        <position position="1168"/>
    </location>
</feature>
<feature type="modified residue" description="Phosphoserine; by GSK3-beta" evidence="10">
    <location>
        <position position="1280"/>
    </location>
</feature>
<feature type="modified residue" description="Phosphoserine" evidence="10">
    <location>
        <position position="1284"/>
    </location>
</feature>
<feature type="glycosylation site" description="N-linked (GlcNAc...) asparagine" evidence="3">
    <location>
        <position position="51"/>
    </location>
</feature>
<feature type="glycosylation site" description="N-linked (GlcNAc...) asparagine" evidence="3">
    <location>
        <position position="102"/>
    </location>
</feature>
<feature type="glycosylation site" description="N-linked (GlcNAc...) asparagine" evidence="3">
    <location>
        <position position="135"/>
    </location>
</feature>
<feature type="glycosylation site" description="N-linked (GlcNAc...) asparagine" evidence="3">
    <location>
        <position position="245"/>
    </location>
</feature>
<feature type="glycosylation site" description="N-linked (GlcNAc...) asparagine" evidence="3">
    <location>
        <position position="314"/>
    </location>
</feature>
<feature type="glycosylation site" description="N-linked (GlcNAc...) asparagine" evidence="3">
    <location>
        <position position="418"/>
    </location>
</feature>
<feature type="glycosylation site" description="N-linked (GlcNAc...) asparagine" evidence="3">
    <location>
        <position position="439"/>
    </location>
</feature>
<feature type="glycosylation site" description="N-linked (GlcNAc...) asparagine" evidence="3">
    <location>
        <position position="535"/>
    </location>
</feature>
<feature type="glycosylation site" description="N-linked (GlcNAc...) asparagine" evidence="3">
    <location>
        <position position="608"/>
    </location>
</feature>
<feature type="glycosylation site" description="N-linked (GlcNAc...) asparagine" evidence="3">
    <location>
        <position position="623"/>
    </location>
</feature>
<feature type="glycosylation site" description="N-linked (GlcNAc...) asparagine" evidence="8">
    <location>
        <position position="641"/>
    </location>
</feature>
<feature type="glycosylation site" description="N-linked (GlcNAc...) asparagine" evidence="9">
    <location>
        <position position="748"/>
    </location>
</feature>
<feature type="glycosylation site" description="N-linked (GlcNAc...) asparagine" evidence="8">
    <location>
        <position position="757"/>
    </location>
</feature>
<feature type="glycosylation site" description="N-linked (GlcNAc...) asparagine" evidence="8">
    <location>
        <position position="765"/>
    </location>
</feature>
<feature type="glycosylation site" description="N-linked (GlcNAc...) asparagine" evidence="9">
    <location>
        <position position="901"/>
    </location>
</feature>
<feature type="glycosylation site" description="N-linked (GlcNAc...) asparagine" evidence="3">
    <location>
        <position position="914"/>
    </location>
</feature>
<feature type="disulfide bond" evidence="2">
    <location>
        <begin position="33"/>
        <end position="52"/>
    </location>
</feature>
<feature type="disulfide bond" evidence="2">
    <location>
        <begin position="150"/>
        <end position="178"/>
    </location>
</feature>
<feature type="disulfide bond" evidence="2">
    <location>
        <begin position="182"/>
        <end position="205"/>
    </location>
</feature>
<feature type="disulfide bond" evidence="2">
    <location>
        <begin position="192"/>
        <end position="211"/>
    </location>
</feature>
<feature type="disulfide bond" evidence="2">
    <location>
        <begin position="215"/>
        <end position="224"/>
    </location>
</feature>
<feature type="disulfide bond" evidence="2">
    <location>
        <begin position="219"/>
        <end position="230"/>
    </location>
</feature>
<feature type="disulfide bond" evidence="2">
    <location>
        <begin position="231"/>
        <end position="239"/>
    </location>
</feature>
<feature type="disulfide bond" evidence="2">
    <location>
        <begin position="235"/>
        <end position="248"/>
    </location>
</feature>
<feature type="disulfide bond" evidence="2">
    <location>
        <begin position="251"/>
        <end position="260"/>
    </location>
</feature>
<feature type="disulfide bond" evidence="2">
    <location>
        <begin position="264"/>
        <end position="276"/>
    </location>
</feature>
<feature type="disulfide bond" evidence="2">
    <location>
        <begin position="282"/>
        <end position="303"/>
    </location>
</feature>
<feature type="disulfide bond" evidence="2">
    <location>
        <begin position="307"/>
        <end position="321"/>
    </location>
</feature>
<feature type="disulfide bond" evidence="2">
    <location>
        <begin position="324"/>
        <end position="328"/>
    </location>
</feature>
<feature type="disulfide bond" evidence="2">
    <location>
        <begin position="332"/>
        <end position="354"/>
    </location>
</feature>
<feature type="disulfide bond" evidence="2">
    <location>
        <begin position="456"/>
        <end position="489"/>
    </location>
</feature>
<feature type="cross-link" description="Glycyl lysine isopeptide (Lys-Gly) (interchain with G-Cter in ubiquitin)" evidence="2">
    <location>
        <position position="1170"/>
    </location>
</feature>
<feature type="cross-link" description="Glycyl lysine isopeptide (Lys-Gly) (interchain with G-Cter in ubiquitin)" evidence="2">
    <location>
        <position position="1173"/>
    </location>
</feature>
<feature type="sequence conflict" description="In Ref. 2; AAC52123." evidence="13" ref="2">
    <original>FL</original>
    <variation>LV</variation>
    <location>
        <begin position="58"/>
        <end position="59"/>
    </location>
</feature>
<feature type="sequence conflict" description="In Ref. 2; AAC52123." evidence="13" ref="2">
    <original>C</original>
    <variation>S</variation>
    <location>
        <position position="260"/>
    </location>
</feature>
<feature type="sequence conflict" description="In Ref. 2; AAC52123." evidence="13" ref="2">
    <original>D</original>
    <variation>G</variation>
    <location>
        <position position="301"/>
    </location>
</feature>
<feature type="sequence conflict" description="In Ref. 2; AAC52123." evidence="13" ref="2">
    <original>E</original>
    <variation>V</variation>
    <location>
        <position position="306"/>
    </location>
</feature>
<feature type="sequence conflict" description="In Ref. 2; AAC52123." evidence="13" ref="2">
    <original>C</original>
    <variation>S</variation>
    <location>
        <position position="324"/>
    </location>
</feature>
<feature type="sequence conflict" description="In Ref. 3; AAA40013." evidence="13" ref="3">
    <original>V</original>
    <variation>I</variation>
    <location>
        <position position="1134"/>
    </location>
</feature>
<feature type="sequence conflict" description="In Ref. 3; AAA40013." evidence="13" ref="3">
    <original>V</original>
    <variation>D</variation>
    <location>
        <position position="1145"/>
    </location>
</feature>
<feature type="sequence conflict" description="In Ref. 3; AAA40013." evidence="13" ref="3">
    <original>V</original>
    <variation>I</variation>
    <location>
        <position position="1202"/>
    </location>
</feature>
<protein>
    <recommendedName>
        <fullName>Insulin-like growth factor 1 receptor</fullName>
        <ecNumber>2.7.10.1</ecNumber>
    </recommendedName>
    <alternativeName>
        <fullName>Insulin-like growth factor I receptor</fullName>
        <shortName>IGF-I receptor</shortName>
    </alternativeName>
    <cdAntigenName>CD221</cdAntigenName>
    <component>
        <recommendedName>
            <fullName>Insulin-like growth factor 1 receptor alpha chain</fullName>
        </recommendedName>
    </component>
    <component>
        <recommendedName>
            <fullName>Insulin-like growth factor 1 receptor beta chain</fullName>
        </recommendedName>
    </component>
</protein>
<proteinExistence type="evidence at protein level"/>
<accession>Q60751</accession>
<accession>O70438</accession>
<accession>Q62123</accession>
<keyword id="KW-0002">3D-structure</keyword>
<keyword id="KW-0067">ATP-binding</keyword>
<keyword id="KW-1003">Cell membrane</keyword>
<keyword id="KW-0165">Cleavage on pair of basic residues</keyword>
<keyword id="KW-1015">Disulfide bond</keyword>
<keyword id="KW-0325">Glycoprotein</keyword>
<keyword id="KW-1017">Isopeptide bond</keyword>
<keyword id="KW-0418">Kinase</keyword>
<keyword id="KW-0472">Membrane</keyword>
<keyword id="KW-0547">Nucleotide-binding</keyword>
<keyword id="KW-0597">Phosphoprotein</keyword>
<keyword id="KW-0675">Receptor</keyword>
<keyword id="KW-1185">Reference proteome</keyword>
<keyword id="KW-0677">Repeat</keyword>
<keyword id="KW-0732">Signal</keyword>
<keyword id="KW-0808">Transferase</keyword>
<keyword id="KW-0812">Transmembrane</keyword>
<keyword id="KW-1133">Transmembrane helix</keyword>
<keyword id="KW-0829">Tyrosine-protein kinase</keyword>
<keyword id="KW-0832">Ubl conjugation</keyword>
<sequence length="1373" mass="155788">MKSGSGGGSPTSLWGLVFLSAALSLWPTSGEICGPGIDIRNDYQQLKRLENCTVIEGFLHILLISKAEDYRSYRFPKLTVITEYLLLFRVAGLESLGDLFPNLTVIRGWKLFYNYALVIFEMTNLKDIGLYNLRNITRGAIRIEKNADLCYLSTIDWSLILDAVSNNYIVGNKPPKECGDLCPGTLEEKPMCEKTTINNEYNYRCWTTNRCQKMCPSVCGKRACTENNECCHPECLGSCHTPDDNTTCVACRHYYYKGVCVPACPPGTYRFEGWRCVDRDFCANIPNAESSDSDGFVIHDDECMQECPSGFIRNSTQSMYCIPCEGPCPKVCGDEEKKTKTIDSVTSAQMLQGCTILKGNLLINIRRGNNIASELENFMGLIEVVTGYVKIRHSHALVSLSFLKNLRLILGEEQLEGNYSFYVLDNQNLQQLWDWNHRNLTVRSGKMYFAFNPKLCVSEIYRMEEVTGTKGRQSKGDINTRNNGERASCESDVLRFTSTTTWKNRIIITWHRYRPPDYRDLISFTVYYKEAPFKNVTEYDGQDACGSNSWNMVDVDLPPNKEGEPGILLHGLKPWTQYAVYVKAVTLTMVENDHIRGAKSEILYIRTNASVPSIPLDVLSASNSSSQLIVKWNPPTLPNGNLSYYIVRWQRQPQDGYLYRHNYCSKDKIPIRKYADGTIDVEEVTENPKTEVCGGDKGPCCACPKTEAEKQAEKEEAEYRKVFENFLHNSIFVPRPERRRRDVMQVANTTMSSRSRNTTVADTYNITDPEEFETEYPFFESRVDNKERTVISNLRPFTLYRIDIHSCNHEAEKLGCSASNFVFARTMPAEGADDIPGPVTWEPRPENSIFLKWPEPENPNGLILMYEIKYGSQVEDQRECVSRQEYRKYGGAKLNRLNPGNYTARIQATSLSGNGSWTDPVFFYVPAKTTYENFMHLIIALPVAILLIVGGLVIMLYVFHRKRNNSRLGNGVLYASVNPEYFSAADVYVPDEWEVAREKITMNRELGQGSFGMVYEGVAKGVVKDEPETRVAIKTVNEAASMRERIEFLNEASVMKEFNCHHVVRLLGVVSQGQPTLVIMELMTRGDLKSYLRSLRPEVEQNNLVLIPPSLSKMIQMAGEIADGMAYLNANKFVHRDLAARNCMVAEDFTVKIGDFGMTRDIYETDYYRKGGKGLLPVRWMSPESLKDGVFTTHSDVWSFGVVLWEIATLAEQPYQGLSNEQVLRFVMEGGLLDKPDNCPDMLFELMRMCWQYNPKMRPSFLEIIGSIKDEMEPSFQEVSFYYSEENKPPEPEELEMELEMEPENMESVPLDPSASSASLPLPERHSGHKAENGPGPGVLVLRASFDERQPYAHMNGGRANERALPLPQSSTC</sequence>
<reference key="1">
    <citation type="submission" date="1998-03" db="EMBL/GenBank/DDBJ databases">
        <title>Cloning of cDNA for the mouse insulin-like growth factor I receptor.</title>
        <authorList>
            <person name="Navarro M."/>
            <person name="Garandel V."/>
            <person name="Barenton B."/>
            <person name="Bernardi H."/>
        </authorList>
    </citation>
    <scope>NUCLEOTIDE SEQUENCE [MRNA]</scope>
</reference>
<reference key="2">
    <citation type="journal article" date="1993" name="Proc. Natl. Acad. Sci. U.S.A.">
        <title>Cloning of cDNA for the alpha subunit of mouse insulin-like growth factor I receptor and the role of the receptor in metanephric development.</title>
        <authorList>
            <person name="Wada J."/>
            <person name="Liu Z.Z."/>
            <person name="Alvares K."/>
            <person name="Kumar A."/>
            <person name="Wallner E.I."/>
            <person name="Makino H."/>
            <person name="Kanwar Y.S."/>
        </authorList>
    </citation>
    <scope>NUCLEOTIDE SEQUENCE [MRNA] OF 1-329</scope>
    <source>
        <strain>CD-1</strain>
        <tissue>Kidney</tissue>
    </source>
</reference>
<reference key="3">
    <citation type="journal article" date="1989" name="Gene">
        <title>The application of the polymerase chain reaction to cloning members of the protein tyrosine kinase family.</title>
        <authorList>
            <person name="Wilks A.F."/>
            <person name="Kurban R.R."/>
            <person name="Hovens C.M."/>
            <person name="Ralph S.J."/>
        </authorList>
    </citation>
    <scope>NUCLEOTIDE SEQUENCE [MRNA] OF 1134-1203</scope>
</reference>
<reference key="4">
    <citation type="journal article" date="1993" name="Cell">
        <title>Mice carrying null mutations of the genes encoding insulin-like growth factor I (Igf-1) and type 1 IGF receptor (Igf1r).</title>
        <authorList>
            <person name="Liu J.P."/>
            <person name="Baker J."/>
            <person name="Perkins A.S."/>
            <person name="Robertson E.J."/>
            <person name="Efstratiadis A."/>
        </authorList>
    </citation>
    <scope>DISRUPTION PHENOTYPE</scope>
</reference>
<reference key="5">
    <citation type="journal article" date="2002" name="Mol. Cell. Biol.">
        <title>Regulation of insulin-like growth factor type I (IGF-I) receptor kinase activity by protein tyrosine phosphatase 1B (PTP-1B) and enhanced IGF-I-mediated suppression of apoptosis and motility in PTP-1B-deficient fibroblasts.</title>
        <authorList>
            <person name="Buckley D.A."/>
            <person name="Cheng A."/>
            <person name="Kiely P.A."/>
            <person name="Tremblay M.L."/>
            <person name="O'Connor R."/>
        </authorList>
    </citation>
    <scope>ACTIVITY REGULATION</scope>
</reference>
<reference key="6">
    <citation type="journal article" date="2009" name="Mol. Cell. Proteomics">
        <title>The mouse C2C12 myoblast cell surface N-linked glycoproteome: identification, glycosite occupancy, and membrane orientation.</title>
        <authorList>
            <person name="Gundry R.L."/>
            <person name="Raginski K."/>
            <person name="Tarasova Y."/>
            <person name="Tchernyshyov I."/>
            <person name="Bausch-Fluck D."/>
            <person name="Elliott S.T."/>
            <person name="Boheler K.R."/>
            <person name="Van Eyk J.E."/>
            <person name="Wollscheid B."/>
        </authorList>
    </citation>
    <scope>GLYCOSYLATION [LARGE SCALE ANALYSIS] AT ASN-748 AND ASN-901</scope>
    <source>
        <tissue>Myoblast</tissue>
    </source>
</reference>
<reference key="7">
    <citation type="journal article" date="2009" name="Nat. Biotechnol.">
        <title>Mass-spectrometric identification and relative quantification of N-linked cell surface glycoproteins.</title>
        <authorList>
            <person name="Wollscheid B."/>
            <person name="Bausch-Fluck D."/>
            <person name="Henderson C."/>
            <person name="O'Brien R."/>
            <person name="Bibel M."/>
            <person name="Schiess R."/>
            <person name="Aebersold R."/>
            <person name="Watts J.D."/>
        </authorList>
    </citation>
    <scope>GLYCOSYLATION [LARGE SCALE ANALYSIS] AT ASN-641; ASN-757 AND ASN-765</scope>
</reference>
<reference key="8">
    <citation type="journal article" date="2010" name="Cell">
        <title>A tissue-specific atlas of mouse protein phosphorylation and expression.</title>
        <authorList>
            <person name="Huttlin E.L."/>
            <person name="Jedrychowski M.P."/>
            <person name="Elias J.E."/>
            <person name="Goswami T."/>
            <person name="Rad R."/>
            <person name="Beausoleil S.A."/>
            <person name="Villen J."/>
            <person name="Haas W."/>
            <person name="Sowa M.E."/>
            <person name="Gygi S.P."/>
        </authorList>
    </citation>
    <scope>IDENTIFICATION BY MASS SPECTROMETRY [LARGE SCALE ANALYSIS]</scope>
    <source>
        <tissue>Kidney</tissue>
        <tissue>Lung</tissue>
        <tissue>Testis</tissue>
    </source>
</reference>
<reference key="9">
    <citation type="journal article" date="2012" name="J. Biol. Chem.">
        <title>Serine phosphorylation of the insulin-like growth factor I (IGF-1) receptor C-terminal tail restrains kinase activity and cell growth.</title>
        <authorList>
            <person name="Kelly G.M."/>
            <person name="Buckley D.A."/>
            <person name="Kiely P.A."/>
            <person name="Adams D.R."/>
            <person name="O'Connor R."/>
        </authorList>
    </citation>
    <scope>PHOSPHORYLATION AT SER-1280 AND SER-1284</scope>
</reference>
<reference key="10">
    <citation type="journal article" date="2016" name="Nat. Med.">
        <title>Loss of the proteostasis factor AIRAPL causes myeloid transformation by deregulating IGF-1 signaling.</title>
        <authorList>
            <person name="Osorio F.G."/>
            <person name="Soria-Valles C."/>
            <person name="Santiago-Fernandez O."/>
            <person name="Bernal T."/>
            <person name="Mittelbrunn M."/>
            <person name="Colado E."/>
            <person name="Rodriguez F."/>
            <person name="Bonzon-Kulichenko E."/>
            <person name="Vazquez J."/>
            <person name="Porta-de-la-Riva M."/>
            <person name="Ceron J."/>
            <person name="Fueyo A."/>
            <person name="Li J."/>
            <person name="Green A.R."/>
            <person name="Freije J.M."/>
            <person name="Lopez-Otin C."/>
        </authorList>
    </citation>
    <scope>INTERACTION WITH ZFAND2B</scope>
</reference>
<name>IGF1R_MOUSE</name>
<comment type="function">
    <text evidence="1">Receptor tyrosine kinase which mediates actions of insulin-like growth factor 1 (IGF1). Binds IGF1 with high affinity and IGF2 and insulin (INS) with a lower affinity. The activated IGF1R is involved in cell growth and survival control. IGF1R is crucial for tumor transformation and survival of malignant cell. Ligand binding activates the receptor kinase, leading to receptor autophosphorylation, and tyrosines phosphorylation of multiple substrates, that function as signaling adapter proteins including, the insulin-receptor substrates (IRS1/2), Shc and 14-3-3 proteins. Phosphorylation of IRSs proteins lead to the activation of two main signaling pathways: the PI3K-AKT/PKB pathway and the Ras-MAPK pathway. The result of activating the MAPK pathway is increased cellular proliferation, whereas activating the PI3K pathway inhibits apoptosis and stimulates protein synthesis. Phosphorylated IRS1 can activate the 85 kDa regulatory subunit of PI3K (PIK3R1), leading to activation of several downstream substrates, including protein AKT/PKB. AKT phosphorylation, in turn, enhances protein synthesis through mTOR activation and triggers the antiapoptotic effects of IGFIR through phosphorylation and inactivation of BAD. In parallel to PI3K-driven signaling, recruitment of Grb2/SOS by phosphorylated IRS1 or Shc leads to recruitment of Ras and activation of the ras-MAPK pathway. In addition to these two main signaling pathways IGF1R signals also through the Janus kinase/signal transducer and activator of transcription pathway (JAK/STAT). Phosphorylation of JAK proteins can lead to phosphorylation/activation of signal transducers and activators of transcription (STAT) proteins. In particular activation of STAT3, may be essential for the transforming activity of IGF1R. The JAK/STAT pathway activates gene transcription and may be responsible for the transforming activity. JNK kinases can also be activated by the IGF1R. IGF1 exerts inhibiting activities on JNK activation via phosphorylation and inhibition of MAP3K5/ASK1, which is able to directly associate with the IGF1R (By similarity). When present in a hybrid receptor with INSR, binds IGF1 (By similarity).</text>
</comment>
<comment type="catalytic activity">
    <reaction evidence="6">
        <text>L-tyrosyl-[protein] + ATP = O-phospho-L-tyrosyl-[protein] + ADP + H(+)</text>
        <dbReference type="Rhea" id="RHEA:10596"/>
        <dbReference type="Rhea" id="RHEA-COMP:10136"/>
        <dbReference type="Rhea" id="RHEA-COMP:20101"/>
        <dbReference type="ChEBI" id="CHEBI:15378"/>
        <dbReference type="ChEBI" id="CHEBI:30616"/>
        <dbReference type="ChEBI" id="CHEBI:46858"/>
        <dbReference type="ChEBI" id="CHEBI:61978"/>
        <dbReference type="ChEBI" id="CHEBI:456216"/>
        <dbReference type="EC" id="2.7.10.1"/>
    </reaction>
</comment>
<comment type="activity regulation">
    <text evidence="1">Activated by autophosphorylation at Tyr-1163, Tyr-1167 and Tyr-1168 on the kinase activation loop; phosphorylation at all three tyrosine residues is required for optimal kinase activity. Inhibited by MSC1609119A-1, BMS-754807, PQIP, benzimidazole pyridinone, isoquinolinedione, bis-azaindole, 3-cyanoquinoline, 2,4-bis-arylamino-1,3-pyrimidine, pyrrolopyrimidine, pyrrole-5-carboxaldehyde, picropodophyllin (PPP), tyrphostin derivatives. While most inhibitors bind to the ATP binding pocket, MSC1609119A-1 functions as allosteric inhibitor and binds close to the DFG motif and the activation loop (By similarity).</text>
</comment>
<comment type="subunit">
    <text evidence="2 11">Tetramer of 2 alpha and 2 beta chains linked by disulfide bonds. The alpha chains contribute to the formation of the ligand-binding domain, while the beta chain carries the kinase domain. Interacts with PIK3R1 and with the PTB/PID domains of IRS1 and SHC1 in vitro when autophosphorylated on tyrosine residues. Forms a hybrid receptor with INSR, the hybrid is a tetramer consisting of 1 alpha chain and 1 beta chain of INSR and 1 alpha chain and 1 beta chain of IGF1R. Interacts with ARRB1 and ARRB2. Interacts with GRB10. Interacts with RACK1. Interacts with SOCS1, SOCS2 and SOCS3. Interacts with 14-3-3 proteins. Interacts with NMD2. Interacts with MAP3K5. Interacts with STAT3. Found in a ternary complex with IGF1 and ITGAV:ITGB3 or ITGA6:ITGB4 (By similarity). Interacts (nascent precursor form) with ZFAND2B (PubMed:26692333).</text>
</comment>
<comment type="subcellular location">
    <subcellularLocation>
        <location evidence="1">Cell membrane</location>
        <topology evidence="1">Single-pass type I membrane protein</topology>
    </subcellularLocation>
</comment>
<comment type="PTM">
    <text evidence="2 10">Autophosphorylated on tyrosine residues in response to ligand binding (By similarity). Autophosphorylation occurs in trans, i.e. one subunit of the dimeric receptor phosphorylates tyrosine residues on the other subunit (By similarity). Autophosphorylation occurs in a sequential manner; Tyr-1167 is predominantly phosphorylated first, followed by phosphorylation of Tyr-1163 and Tyr-1168 (By similarity). While every single phosphorylation increases kinase activity, all three tyrosine residues in the kinase activation loop (Tyr-1163, Tyr-1167 and Tyr-1168) have to be phosphorylated for optimal activity (By similarity). Can be autophosphorylated at additional tyrosine residues (in vitro) (By similarity). Autophosphorylated is followed by phosphorylation of juxtamembrane tyrosines and C-terminal serines (By similarity). May also be phosphorylated at Tyr-1163 and Tyr-1168 by mTORC2 (By similarity). Phosphorylation of Tyr-981 is required for IRS1- and SHC1-binding (By similarity). Phosphorylation of Ser-1280 by GSK-3beta restrains kinase activity and promotes cell surface expression, it requires a priming phosphorylation at Ser-1284 (PubMed:22685298). Dephosphorylated by PTPN1 (By similarity).</text>
</comment>
<comment type="PTM">
    <text evidence="1">Polyubiquitinated at Lys-1170 and Lys-1173 through both 'Lys-48' and 'Lys-29' linkages, promoting receptor endocytosis and subsequent degradation by the proteasome. Ubiquitination is facilitated by pre-existing phosphorylation (By similarity).</text>
</comment>
<comment type="PTM">
    <text evidence="1">Sumoylated with SUMO1.</text>
</comment>
<comment type="PTM">
    <text evidence="1">Controlled by regulated intramembrane proteolysis (RIP). Undergoes metalloprotease-dependent constitutive ectodomain shedding to produce a membrane-anchored 52 kDa C-Terminal fragment which is further processed by presenilin gamma-secretase to yield an intracellular 50 kDa fragment (By similarity).</text>
</comment>
<comment type="disruption phenotype">
    <text evidence="12">Deficient mice are 45% of the size of wild-type littermates at birth, and die shortly due to severe organ hypoplasia.</text>
</comment>
<comment type="similarity">
    <text evidence="4">Belongs to the protein kinase superfamily. Tyr protein kinase family. Insulin receptor subfamily.</text>
</comment>